<evidence type="ECO:0000250" key="1"/>
<evidence type="ECO:0000250" key="2">
    <source>
        <dbReference type="UniProtKB" id="P38377"/>
    </source>
</evidence>
<evidence type="ECO:0000250" key="3">
    <source>
        <dbReference type="UniProtKB" id="P61619"/>
    </source>
</evidence>
<evidence type="ECO:0000255" key="4"/>
<evidence type="ECO:0000305" key="5"/>
<organism>
    <name type="scientific">Bovichtus variegatus</name>
    <name type="common">Thornfish</name>
    <dbReference type="NCBI Taxonomy" id="36205"/>
    <lineage>
        <taxon>Eukaryota</taxon>
        <taxon>Metazoa</taxon>
        <taxon>Chordata</taxon>
        <taxon>Craniata</taxon>
        <taxon>Vertebrata</taxon>
        <taxon>Euteleostomi</taxon>
        <taxon>Actinopterygii</taxon>
        <taxon>Neopterygii</taxon>
        <taxon>Teleostei</taxon>
        <taxon>Neoteleostei</taxon>
        <taxon>Acanthomorphata</taxon>
        <taxon>Eupercaria</taxon>
        <taxon>Perciformes</taxon>
        <taxon>Notothenioidei</taxon>
        <taxon>Bovichtidae</taxon>
        <taxon>Bovichtus</taxon>
    </lineage>
</organism>
<protein>
    <recommendedName>
        <fullName>Protein transport protein Sec61 subunit alpha</fullName>
    </recommendedName>
</protein>
<gene>
    <name type="primary">sec61a</name>
</gene>
<proteinExistence type="evidence at transcript level"/>
<reference key="1">
    <citation type="journal article" date="2003" name="J. Cell Sci.">
        <title>Protein translocation across the endoplasmic reticulum membrane in cold-adapted organisms.</title>
        <authorList>
            <person name="Romisch K."/>
            <person name="Collie N."/>
            <person name="Soto N."/>
            <person name="Logue J."/>
            <person name="Lindsay M."/>
            <person name="Scheper W."/>
            <person name="Cheng C.-H.C."/>
        </authorList>
    </citation>
    <scope>NUCLEOTIDE SEQUENCE [MRNA]</scope>
    <source>
        <tissue>Liver</tissue>
    </source>
</reference>
<sequence length="476" mass="52328">MGIKFLEFIKPFCAVLPEIQKPERKIQFREKVLWTAITLFIFLVCCQIPLFGIMSSDSADPFYWMRVILASNRGTLMELGIAPIVTSGLIMQLLAGAKIIEVGDTPKDRALFNGAQKLFGMIITIGQAIVYVMTGMYGDPSEMGAGICLLIIIQLFVAGLIVLLLDELLQKGYGLGSGISLFIATNICETIVWKAFGPTTVNTGRGTEFEGAIIALFHLLATRTDKVRALREAFYRQNLPNLMNLIATVFVFAVVIYFQGFRVDLPIKSARYRGQYNTYPIKLFYTSNIPIILQSALVSNLYVISQMLSTRFSGNFLVNLLGTWSDATTSGPARAYPVAGLCYYLSPPESFGSVLDDPVHAVIYIVFMLGSCAFFSKTWIEVSGSSAKDVAKQLKEQQMVMRGHRETSMVHELNRYIPTAAAFGGLCIGGLSVMADFLGAIGSGTGILLAVTIIYQYFEIFVKEQSEVGSMGALLF</sequence>
<keyword id="KW-0217">Developmental protein</keyword>
<keyword id="KW-0256">Endoplasmic reticulum</keyword>
<keyword id="KW-0472">Membrane</keyword>
<keyword id="KW-0653">Protein transport</keyword>
<keyword id="KW-0811">Translocation</keyword>
<keyword id="KW-0812">Transmembrane</keyword>
<keyword id="KW-1133">Transmembrane helix</keyword>
<keyword id="KW-0813">Transport</keyword>
<feature type="initiator methionine" description="Removed" evidence="1">
    <location>
        <position position="1"/>
    </location>
</feature>
<feature type="chain" id="PRO_0000131800" description="Protein transport protein Sec61 subunit alpha">
    <location>
        <begin position="2"/>
        <end position="476"/>
    </location>
</feature>
<feature type="topological domain" description="Cytoplasmic" evidence="4">
    <location>
        <begin position="2"/>
        <end position="33"/>
    </location>
</feature>
<feature type="transmembrane region" description="Helical" evidence="4">
    <location>
        <begin position="34"/>
        <end position="53"/>
    </location>
</feature>
<feature type="topological domain" description="Lumenal" evidence="4">
    <location>
        <begin position="54"/>
        <end position="76"/>
    </location>
</feature>
<feature type="transmembrane region" description="Helical" evidence="4">
    <location>
        <begin position="77"/>
        <end position="96"/>
    </location>
</feature>
<feature type="topological domain" description="Cytoplasmic" evidence="4">
    <location>
        <begin position="97"/>
        <end position="117"/>
    </location>
</feature>
<feature type="transmembrane region" description="Helical" evidence="4">
    <location>
        <begin position="118"/>
        <end position="138"/>
    </location>
</feature>
<feature type="topological domain" description="Lumenal" evidence="4">
    <location>
        <begin position="139"/>
        <end position="144"/>
    </location>
</feature>
<feature type="transmembrane region" description="Helical" evidence="4">
    <location>
        <begin position="145"/>
        <end position="165"/>
    </location>
</feature>
<feature type="topological domain" description="Cytoplasmic" evidence="4">
    <location>
        <begin position="166"/>
        <end position="172"/>
    </location>
</feature>
<feature type="transmembrane region" description="Helical" evidence="4">
    <location>
        <begin position="173"/>
        <end position="193"/>
    </location>
</feature>
<feature type="topological domain" description="Lumenal" evidence="4">
    <location>
        <begin position="194"/>
        <end position="240"/>
    </location>
</feature>
<feature type="transmembrane region" description="Helical" evidence="4">
    <location>
        <begin position="241"/>
        <end position="261"/>
    </location>
</feature>
<feature type="topological domain" description="Cytoplasmic" evidence="4">
    <location>
        <begin position="262"/>
        <end position="288"/>
    </location>
</feature>
<feature type="transmembrane region" description="Helical" evidence="4">
    <location>
        <begin position="289"/>
        <end position="309"/>
    </location>
</feature>
<feature type="topological domain" description="Lumenal" evidence="4">
    <location>
        <begin position="310"/>
        <end position="354"/>
    </location>
</feature>
<feature type="transmembrane region" description="Helical" evidence="4">
    <location>
        <begin position="355"/>
        <end position="375"/>
    </location>
</feature>
<feature type="topological domain" description="Cytoplasmic" evidence="4">
    <location>
        <begin position="376"/>
        <end position="420"/>
    </location>
</feature>
<feature type="transmembrane region" description="Helical" evidence="4">
    <location>
        <begin position="421"/>
        <end position="441"/>
    </location>
</feature>
<feature type="topological domain" description="Lumenal" evidence="4">
    <location>
        <begin position="442"/>
        <end position="445"/>
    </location>
</feature>
<feature type="transmembrane region" description="Helical" evidence="4">
    <location>
        <begin position="446"/>
        <end position="462"/>
    </location>
</feature>
<feature type="topological domain" description="Cytoplasmic" evidence="4">
    <location>
        <begin position="463"/>
        <end position="476"/>
    </location>
</feature>
<accession>Q8AY31</accession>
<dbReference type="EMBL" id="AY103476">
    <property type="protein sequence ID" value="AAM52492.1"/>
    <property type="molecule type" value="mRNA"/>
</dbReference>
<dbReference type="SMR" id="Q8AY31"/>
<dbReference type="GO" id="GO:0005789">
    <property type="term" value="C:endoplasmic reticulum membrane"/>
    <property type="evidence" value="ECO:0000250"/>
    <property type="project" value="UniProtKB"/>
</dbReference>
<dbReference type="GO" id="GO:0039019">
    <property type="term" value="P:pronephric nephron development"/>
    <property type="evidence" value="ECO:0000250"/>
    <property type="project" value="UniProtKB"/>
</dbReference>
<dbReference type="GO" id="GO:0045047">
    <property type="term" value="P:protein targeting to ER"/>
    <property type="evidence" value="ECO:0000250"/>
    <property type="project" value="UniProtKB"/>
</dbReference>
<dbReference type="GO" id="GO:0015031">
    <property type="term" value="P:protein transport"/>
    <property type="evidence" value="ECO:0007669"/>
    <property type="project" value="UniProtKB-KW"/>
</dbReference>
<dbReference type="FunFam" id="1.10.3370.10:FF:000002">
    <property type="entry name" value="Transport Sec61 subunit alpha isoform 2"/>
    <property type="match status" value="1"/>
</dbReference>
<dbReference type="Gene3D" id="1.10.3370.10">
    <property type="entry name" value="SecY subunit domain"/>
    <property type="match status" value="1"/>
</dbReference>
<dbReference type="InterPro" id="IPR002208">
    <property type="entry name" value="SecY/SEC61-alpha"/>
</dbReference>
<dbReference type="InterPro" id="IPR030659">
    <property type="entry name" value="SecY_CS"/>
</dbReference>
<dbReference type="InterPro" id="IPR023201">
    <property type="entry name" value="SecY_dom_sf"/>
</dbReference>
<dbReference type="InterPro" id="IPR019561">
    <property type="entry name" value="Translocon_Sec61/SecY_plug_dom"/>
</dbReference>
<dbReference type="NCBIfam" id="TIGR00967">
    <property type="entry name" value="3a0501s007"/>
    <property type="match status" value="1"/>
</dbReference>
<dbReference type="NCBIfam" id="NF006341">
    <property type="entry name" value="PRK08568.1-5"/>
    <property type="match status" value="1"/>
</dbReference>
<dbReference type="PANTHER" id="PTHR10906">
    <property type="entry name" value="SECY/SEC61-ALPHA FAMILY MEMBER"/>
    <property type="match status" value="1"/>
</dbReference>
<dbReference type="Pfam" id="PF10559">
    <property type="entry name" value="Plug_translocon"/>
    <property type="match status" value="1"/>
</dbReference>
<dbReference type="Pfam" id="PF00344">
    <property type="entry name" value="SecY"/>
    <property type="match status" value="1"/>
</dbReference>
<dbReference type="PIRSF" id="PIRSF004557">
    <property type="entry name" value="SecY"/>
    <property type="match status" value="1"/>
</dbReference>
<dbReference type="SUPFAM" id="SSF103491">
    <property type="entry name" value="Preprotein translocase SecY subunit"/>
    <property type="match status" value="1"/>
</dbReference>
<dbReference type="PROSITE" id="PS00755">
    <property type="entry name" value="SECY_1"/>
    <property type="match status" value="1"/>
</dbReference>
<dbReference type="PROSITE" id="PS00756">
    <property type="entry name" value="SECY_2"/>
    <property type="match status" value="1"/>
</dbReference>
<comment type="function">
    <text evidence="3">Component of SEC61 channel-forming translocon complex that mediates transport of signal peptide-containing precursor polypeptides across the endoplasmic reticulum (ER). Forms a ribosome receptor and a gated pore in the ER membrane, both functions required for cotranslational translocation of nascent polypeptides. May cooperate with auxiliary protein SEC62, SEC63 and HSPA5/BiP to enable post-translational transport of small presecretory proteins. The SEC61 channel is also involved in ER membrane insertion of transmembrane proteins: it mediates membrane insertion of the first few transmembrane segments of proteins, while insertion of subsequent transmembrane regions of multi-pass membrane proteins is mediated by the multi-pass translocon (MPT) complex.</text>
</comment>
<comment type="subunit">
    <text evidence="2 3">The SEC61 channel-forming translocon complex consists of channel-forming core components SEC61A1, SEC61B and SEC61G and different auxiliary components such as SEC62 and SEC63 (By similarity). The SEC61 channel associates with the multi-pass translocon (MPT) complex (By similarity).</text>
</comment>
<comment type="subcellular location">
    <subcellularLocation>
        <location evidence="3">Endoplasmic reticulum membrane</location>
        <topology evidence="3">Multi-pass membrane protein</topology>
    </subcellularLocation>
</comment>
<comment type="similarity">
    <text evidence="5">Belongs to the SecY/SEC61-alpha family.</text>
</comment>
<name>SC61A_BOVVA</name>